<protein>
    <recommendedName>
        <fullName>Long-chain-alcohol oxidase FAO4A</fullName>
        <ecNumber>1.1.3.20</ecNumber>
    </recommendedName>
    <alternativeName>
        <fullName>Long-chain fatty alcohol oxidase 4A</fullName>
    </alternativeName>
</protein>
<organism>
    <name type="scientific">Arabidopsis thaliana</name>
    <name type="common">Mouse-ear cress</name>
    <dbReference type="NCBI Taxonomy" id="3702"/>
    <lineage>
        <taxon>Eukaryota</taxon>
        <taxon>Viridiplantae</taxon>
        <taxon>Streptophyta</taxon>
        <taxon>Embryophyta</taxon>
        <taxon>Tracheophyta</taxon>
        <taxon>Spermatophyta</taxon>
        <taxon>Magnoliopsida</taxon>
        <taxon>eudicotyledons</taxon>
        <taxon>Gunneridae</taxon>
        <taxon>Pentapetalae</taxon>
        <taxon>rosids</taxon>
        <taxon>malvids</taxon>
        <taxon>Brassicales</taxon>
        <taxon>Brassicaceae</taxon>
        <taxon>Camelineae</taxon>
        <taxon>Arabidopsis</taxon>
    </lineage>
</organism>
<proteinExistence type="inferred from homology"/>
<name>FAO4A_ARATH</name>
<keyword id="KW-0274">FAD</keyword>
<keyword id="KW-0285">Flavoprotein</keyword>
<keyword id="KW-0472">Membrane</keyword>
<keyword id="KW-0560">Oxidoreductase</keyword>
<keyword id="KW-1185">Reference proteome</keyword>
<keyword id="KW-0812">Transmembrane</keyword>
<keyword id="KW-1133">Transmembrane helix</keyword>
<evidence type="ECO:0000250" key="1"/>
<evidence type="ECO:0000250" key="2">
    <source>
        <dbReference type="UniProtKB" id="E4QP00"/>
    </source>
</evidence>
<evidence type="ECO:0000255" key="3"/>
<evidence type="ECO:0000305" key="4"/>
<reference key="1">
    <citation type="journal article" date="1999" name="Nature">
        <title>Sequence and analysis of chromosome 4 of the plant Arabidopsis thaliana.</title>
        <authorList>
            <person name="Mayer K.F.X."/>
            <person name="Schueller C."/>
            <person name="Wambutt R."/>
            <person name="Murphy G."/>
            <person name="Volckaert G."/>
            <person name="Pohl T."/>
            <person name="Duesterhoeft A."/>
            <person name="Stiekema W."/>
            <person name="Entian K.-D."/>
            <person name="Terryn N."/>
            <person name="Harris B."/>
            <person name="Ansorge W."/>
            <person name="Brandt P."/>
            <person name="Grivell L.A."/>
            <person name="Rieger M."/>
            <person name="Weichselgartner M."/>
            <person name="de Simone V."/>
            <person name="Obermaier B."/>
            <person name="Mache R."/>
            <person name="Mueller M."/>
            <person name="Kreis M."/>
            <person name="Delseny M."/>
            <person name="Puigdomenech P."/>
            <person name="Watson M."/>
            <person name="Schmidtheini T."/>
            <person name="Reichert B."/>
            <person name="Portetelle D."/>
            <person name="Perez-Alonso M."/>
            <person name="Boutry M."/>
            <person name="Bancroft I."/>
            <person name="Vos P."/>
            <person name="Hoheisel J."/>
            <person name="Zimmermann W."/>
            <person name="Wedler H."/>
            <person name="Ridley P."/>
            <person name="Langham S.-A."/>
            <person name="McCullagh B."/>
            <person name="Bilham L."/>
            <person name="Robben J."/>
            <person name="van der Schueren J."/>
            <person name="Grymonprez B."/>
            <person name="Chuang Y.-J."/>
            <person name="Vandenbussche F."/>
            <person name="Braeken M."/>
            <person name="Weltjens I."/>
            <person name="Voet M."/>
            <person name="Bastiaens I."/>
            <person name="Aert R."/>
            <person name="Defoor E."/>
            <person name="Weitzenegger T."/>
            <person name="Bothe G."/>
            <person name="Ramsperger U."/>
            <person name="Hilbert H."/>
            <person name="Braun M."/>
            <person name="Holzer E."/>
            <person name="Brandt A."/>
            <person name="Peters S."/>
            <person name="van Staveren M."/>
            <person name="Dirkse W."/>
            <person name="Mooijman P."/>
            <person name="Klein Lankhorst R."/>
            <person name="Rose M."/>
            <person name="Hauf J."/>
            <person name="Koetter P."/>
            <person name="Berneiser S."/>
            <person name="Hempel S."/>
            <person name="Feldpausch M."/>
            <person name="Lamberth S."/>
            <person name="Van den Daele H."/>
            <person name="De Keyser A."/>
            <person name="Buysshaert C."/>
            <person name="Gielen J."/>
            <person name="Villarroel R."/>
            <person name="De Clercq R."/>
            <person name="van Montagu M."/>
            <person name="Rogers J."/>
            <person name="Cronin A."/>
            <person name="Quail M.A."/>
            <person name="Bray-Allen S."/>
            <person name="Clark L."/>
            <person name="Doggett J."/>
            <person name="Hall S."/>
            <person name="Kay M."/>
            <person name="Lennard N."/>
            <person name="McLay K."/>
            <person name="Mayes R."/>
            <person name="Pettett A."/>
            <person name="Rajandream M.A."/>
            <person name="Lyne M."/>
            <person name="Benes V."/>
            <person name="Rechmann S."/>
            <person name="Borkova D."/>
            <person name="Bloecker H."/>
            <person name="Scharfe M."/>
            <person name="Grimm M."/>
            <person name="Loehnert T.-H."/>
            <person name="Dose S."/>
            <person name="de Haan M."/>
            <person name="Maarse A.C."/>
            <person name="Schaefer M."/>
            <person name="Mueller-Auer S."/>
            <person name="Gabel C."/>
            <person name="Fuchs M."/>
            <person name="Fartmann B."/>
            <person name="Granderath K."/>
            <person name="Dauner D."/>
            <person name="Herzl A."/>
            <person name="Neumann S."/>
            <person name="Argiriou A."/>
            <person name="Vitale D."/>
            <person name="Liguori R."/>
            <person name="Piravandi E."/>
            <person name="Massenet O."/>
            <person name="Quigley F."/>
            <person name="Clabauld G."/>
            <person name="Muendlein A."/>
            <person name="Felber R."/>
            <person name="Schnabl S."/>
            <person name="Hiller R."/>
            <person name="Schmidt W."/>
            <person name="Lecharny A."/>
            <person name="Aubourg S."/>
            <person name="Chefdor F."/>
            <person name="Cooke R."/>
            <person name="Berger C."/>
            <person name="Monfort A."/>
            <person name="Casacuberta E."/>
            <person name="Gibbons T."/>
            <person name="Weber N."/>
            <person name="Vandenbol M."/>
            <person name="Bargues M."/>
            <person name="Terol J."/>
            <person name="Torres A."/>
            <person name="Perez-Perez A."/>
            <person name="Purnelle B."/>
            <person name="Bent E."/>
            <person name="Johnson S."/>
            <person name="Tacon D."/>
            <person name="Jesse T."/>
            <person name="Heijnen L."/>
            <person name="Schwarz S."/>
            <person name="Scholler P."/>
            <person name="Heber S."/>
            <person name="Francs P."/>
            <person name="Bielke C."/>
            <person name="Frishman D."/>
            <person name="Haase D."/>
            <person name="Lemcke K."/>
            <person name="Mewes H.-W."/>
            <person name="Stocker S."/>
            <person name="Zaccaria P."/>
            <person name="Bevan M."/>
            <person name="Wilson R.K."/>
            <person name="de la Bastide M."/>
            <person name="Habermann K."/>
            <person name="Parnell L."/>
            <person name="Dedhia N."/>
            <person name="Gnoj L."/>
            <person name="Schutz K."/>
            <person name="Huang E."/>
            <person name="Spiegel L."/>
            <person name="Sekhon M."/>
            <person name="Murray J."/>
            <person name="Sheet P."/>
            <person name="Cordes M."/>
            <person name="Abu-Threideh J."/>
            <person name="Stoneking T."/>
            <person name="Kalicki J."/>
            <person name="Graves T."/>
            <person name="Harmon G."/>
            <person name="Edwards J."/>
            <person name="Latreille P."/>
            <person name="Courtney L."/>
            <person name="Cloud J."/>
            <person name="Abbott A."/>
            <person name="Scott K."/>
            <person name="Johnson D."/>
            <person name="Minx P."/>
            <person name="Bentley D."/>
            <person name="Fulton B."/>
            <person name="Miller N."/>
            <person name="Greco T."/>
            <person name="Kemp K."/>
            <person name="Kramer J."/>
            <person name="Fulton L."/>
            <person name="Mardis E."/>
            <person name="Dante M."/>
            <person name="Pepin K."/>
            <person name="Hillier L.W."/>
            <person name="Nelson J."/>
            <person name="Spieth J."/>
            <person name="Ryan E."/>
            <person name="Andrews S."/>
            <person name="Geisel C."/>
            <person name="Layman D."/>
            <person name="Du H."/>
            <person name="Ali J."/>
            <person name="Berghoff A."/>
            <person name="Jones K."/>
            <person name="Drone K."/>
            <person name="Cotton M."/>
            <person name="Joshu C."/>
            <person name="Antonoiu B."/>
            <person name="Zidanic M."/>
            <person name="Strong C."/>
            <person name="Sun H."/>
            <person name="Lamar B."/>
            <person name="Yordan C."/>
            <person name="Ma P."/>
            <person name="Zhong J."/>
            <person name="Preston R."/>
            <person name="Vil D."/>
            <person name="Shekher M."/>
            <person name="Matero A."/>
            <person name="Shah R."/>
            <person name="Swaby I.K."/>
            <person name="O'Shaughnessy A."/>
            <person name="Rodriguez M."/>
            <person name="Hoffman J."/>
            <person name="Till S."/>
            <person name="Granat S."/>
            <person name="Shohdy N."/>
            <person name="Hasegawa A."/>
            <person name="Hameed A."/>
            <person name="Lodhi M."/>
            <person name="Johnson A."/>
            <person name="Chen E."/>
            <person name="Marra M.A."/>
            <person name="Martienssen R."/>
            <person name="McCombie W.R."/>
        </authorList>
    </citation>
    <scope>NUCLEOTIDE SEQUENCE [LARGE SCALE GENOMIC DNA]</scope>
    <source>
        <strain>cv. Columbia</strain>
    </source>
</reference>
<reference key="2">
    <citation type="journal article" date="2017" name="Plant J.">
        <title>Araport11: a complete reannotation of the Arabidopsis thaliana reference genome.</title>
        <authorList>
            <person name="Cheng C.Y."/>
            <person name="Krishnakumar V."/>
            <person name="Chan A.P."/>
            <person name="Thibaud-Nissen F."/>
            <person name="Schobel S."/>
            <person name="Town C.D."/>
        </authorList>
    </citation>
    <scope>GENOME REANNOTATION</scope>
    <source>
        <strain>cv. Columbia</strain>
    </source>
</reference>
<reference key="3">
    <citation type="journal article" date="2000" name="J. Biol. Chem.">
        <title>A consensus sequence for long-chain fatty-acid alcohol oxidases from Candida identifies a family of genes involved in lipid omega-oxidation in yeast with homologues in plants and bacteria.</title>
        <authorList>
            <person name="Vanhanen S."/>
            <person name="West M."/>
            <person name="Kroon J.T."/>
            <person name="Lindner N."/>
            <person name="Casey J."/>
            <person name="Cheng Q."/>
            <person name="Elborough K.M."/>
            <person name="Slabas A.R."/>
        </authorList>
    </citation>
    <scope>IDENTIFICATION</scope>
</reference>
<sequence length="726" mass="80068">MESLVAICDTFISSIDDSGVGHVDDCVAGYFSASASQTGTPDRVARLMSERLHHPKKWILRAGLWLLSTWIGSLVLCGWRSFTGEFPYFRRFCRLPEKRREEILLNWSSSYFSLLRMLFRTIKLISALVFFTQVDEKGRNLAWKAIGYNGPSPDHSDHEVELNEEKKKKKPEEIFGPLYNGIVDLKSPREAVEKKLAGRGFAVSNQKRNTNGSSISDPVMKIQCDAVVVGSGSGGGVAAGVLAKAGYKVLVIESGNYYARSKLSLLEGQAMDDMYLSGGLLATSDTNVVILAGSTVGGGSTINWSASIKTPEHVMKEWAEKSKLEMFGSDLYREAMDVVCKRMGVQCGFVEEGFNNEVLRKGCEKLGLPVKNIPRNAPSDHYCGFCCLGCKKGQKQGTSETWLVDLVESDNGLILPGCQATEVMYDCEQGKKKKATGVAFAFGEEIYVVESRVTIVACGALRTPHLLKRSGLKNSNIGRNLCLHPVVMAWGWFPEEDKWPEKKKKSYEGGIMTAMSSVVIEETHSSYGEMVIQTPALHPGMFSGIIPWTSSKDFKTRMLKFSRTAHIFALLRDKGTGTIDSKTYIDYNLNDEDEESLKNGLERVLKILAAAGAEEIGTHHSEGRSLNVRTASSLEIERFVREESSKPLKDLSGQICSAHQMGSCRMGIRPEESAVRPTGETWEVERLFVADTSVFPTALGVNPMVTVQSIAYCIGLNVVDVLKKKK</sequence>
<gene>
    <name type="primary">FAO4A</name>
    <name type="ordered locus">At4g19380</name>
    <name type="ORF">T5K18.160</name>
</gene>
<dbReference type="EC" id="1.1.3.20"/>
<dbReference type="EMBL" id="AL022580">
    <property type="protein sequence ID" value="CAA18625.1"/>
    <property type="status" value="ALT_SEQ"/>
    <property type="molecule type" value="Genomic_DNA"/>
</dbReference>
<dbReference type="EMBL" id="AL161550">
    <property type="protein sequence ID" value="CAB78940.1"/>
    <property type="status" value="ALT_SEQ"/>
    <property type="molecule type" value="Genomic_DNA"/>
</dbReference>
<dbReference type="EMBL" id="CP002687">
    <property type="protein sequence ID" value="AEE84174.1"/>
    <property type="molecule type" value="Genomic_DNA"/>
</dbReference>
<dbReference type="PIR" id="T05821">
    <property type="entry name" value="T05821"/>
</dbReference>
<dbReference type="RefSeq" id="NP_193673.2">
    <property type="nucleotide sequence ID" value="NM_118058.3"/>
</dbReference>
<dbReference type="SMR" id="O65709"/>
<dbReference type="BioGRID" id="12972">
    <property type="interactions" value="6"/>
</dbReference>
<dbReference type="FunCoup" id="O65709">
    <property type="interactions" value="7"/>
</dbReference>
<dbReference type="IntAct" id="O65709">
    <property type="interactions" value="6"/>
</dbReference>
<dbReference type="STRING" id="3702.O65709"/>
<dbReference type="PaxDb" id="3702-AT4G19380.1"/>
<dbReference type="EnsemblPlants" id="AT4G19380.1">
    <property type="protein sequence ID" value="AT4G19380.1"/>
    <property type="gene ID" value="AT4G19380"/>
</dbReference>
<dbReference type="GeneID" id="827679"/>
<dbReference type="Gramene" id="AT4G19380.1">
    <property type="protein sequence ID" value="AT4G19380.1"/>
    <property type="gene ID" value="AT4G19380"/>
</dbReference>
<dbReference type="KEGG" id="ath:AT4G19380"/>
<dbReference type="Araport" id="AT4G19380"/>
<dbReference type="TAIR" id="AT4G19380"/>
<dbReference type="eggNOG" id="ENOG502QSD8">
    <property type="taxonomic scope" value="Eukaryota"/>
</dbReference>
<dbReference type="HOGENOM" id="CLU_008878_1_0_1"/>
<dbReference type="InParanoid" id="O65709"/>
<dbReference type="PhylomeDB" id="O65709"/>
<dbReference type="PRO" id="PR:O65709"/>
<dbReference type="Proteomes" id="UP000006548">
    <property type="component" value="Chromosome 4"/>
</dbReference>
<dbReference type="ExpressionAtlas" id="O65709">
    <property type="expression patterns" value="baseline and differential"/>
</dbReference>
<dbReference type="GO" id="GO:0016020">
    <property type="term" value="C:membrane"/>
    <property type="evidence" value="ECO:0007669"/>
    <property type="project" value="UniProtKB-SubCell"/>
</dbReference>
<dbReference type="GO" id="GO:0050660">
    <property type="term" value="F:flavin adenine dinucleotide binding"/>
    <property type="evidence" value="ECO:0007669"/>
    <property type="project" value="InterPro"/>
</dbReference>
<dbReference type="GO" id="GO:0046577">
    <property type="term" value="F:long-chain-alcohol oxidase activity"/>
    <property type="evidence" value="ECO:0007669"/>
    <property type="project" value="UniProtKB-EC"/>
</dbReference>
<dbReference type="Gene3D" id="3.50.50.60">
    <property type="entry name" value="FAD/NAD(P)-binding domain"/>
    <property type="match status" value="2"/>
</dbReference>
<dbReference type="InterPro" id="IPR036188">
    <property type="entry name" value="FAD/NAD-bd_sf"/>
</dbReference>
<dbReference type="InterPro" id="IPR000172">
    <property type="entry name" value="GMC_OxRdtase_N"/>
</dbReference>
<dbReference type="InterPro" id="IPR007867">
    <property type="entry name" value="GMC_OxRtase_C"/>
</dbReference>
<dbReference type="InterPro" id="IPR012400">
    <property type="entry name" value="Long_Oxdase"/>
</dbReference>
<dbReference type="PANTHER" id="PTHR46056">
    <property type="entry name" value="LONG-CHAIN-ALCOHOL OXIDASE"/>
    <property type="match status" value="1"/>
</dbReference>
<dbReference type="PANTHER" id="PTHR46056:SF4">
    <property type="entry name" value="LONG-CHAIN-ALCOHOL OXIDASE FAO4A"/>
    <property type="match status" value="1"/>
</dbReference>
<dbReference type="Pfam" id="PF05199">
    <property type="entry name" value="GMC_oxred_C"/>
    <property type="match status" value="1"/>
</dbReference>
<dbReference type="Pfam" id="PF00732">
    <property type="entry name" value="GMC_oxred_N"/>
    <property type="match status" value="1"/>
</dbReference>
<dbReference type="PIRSF" id="PIRSF028937">
    <property type="entry name" value="Lg_Ch_AO"/>
    <property type="match status" value="1"/>
</dbReference>
<dbReference type="SUPFAM" id="SSF51905">
    <property type="entry name" value="FAD/NAD(P)-binding domain"/>
    <property type="match status" value="1"/>
</dbReference>
<comment type="function">
    <text evidence="1">Long-chain fatty alcohol oxidase involved in the omega-oxidation pathway of lipid degradation.</text>
</comment>
<comment type="catalytic activity">
    <reaction>
        <text>a long-chain primary fatty alcohol + O2 = a long-chain fatty aldehyde + H2O2</text>
        <dbReference type="Rhea" id="RHEA:22756"/>
        <dbReference type="ChEBI" id="CHEBI:15379"/>
        <dbReference type="ChEBI" id="CHEBI:16240"/>
        <dbReference type="ChEBI" id="CHEBI:17176"/>
        <dbReference type="ChEBI" id="CHEBI:77396"/>
        <dbReference type="EC" id="1.1.3.20"/>
    </reaction>
</comment>
<comment type="subcellular location">
    <subcellularLocation>
        <location evidence="4">Membrane</location>
        <topology evidence="4">Single-pass membrane protein</topology>
    </subcellularLocation>
</comment>
<comment type="similarity">
    <text evidence="4">Belongs to the GMC oxidoreductase family.</text>
</comment>
<comment type="sequence caution" evidence="4">
    <conflict type="erroneous gene model prediction">
        <sequence resource="EMBL-CDS" id="CAA18625"/>
    </conflict>
</comment>
<comment type="sequence caution" evidence="4">
    <conflict type="erroneous gene model prediction">
        <sequence resource="EMBL-CDS" id="CAB78940"/>
    </conflict>
</comment>
<accession>O65709</accession>
<feature type="chain" id="PRO_0000395505" description="Long-chain-alcohol oxidase FAO4A">
    <location>
        <begin position="1"/>
        <end position="726"/>
    </location>
</feature>
<feature type="transmembrane region" description="Helical" evidence="3">
    <location>
        <begin position="103"/>
        <end position="119"/>
    </location>
</feature>
<feature type="active site" description="Proton acceptor" evidence="2">
    <location>
        <position position="659"/>
    </location>
</feature>
<feature type="binding site" evidence="3">
    <location>
        <begin position="224"/>
        <end position="239"/>
    </location>
    <ligand>
        <name>FAD</name>
        <dbReference type="ChEBI" id="CHEBI:57692"/>
    </ligand>
</feature>